<gene>
    <name evidence="4" type="primary">AgnR1</name>
</gene>
<dbReference type="EC" id="1.-.-.-" evidence="5"/>
<dbReference type="EMBL" id="MH898872">
    <property type="protein sequence ID" value="QBG38889.1"/>
    <property type="molecule type" value="Genomic_DNA"/>
</dbReference>
<dbReference type="SMR" id="A0A411PQP8"/>
<dbReference type="GlyCosmos" id="A0A411PQP8">
    <property type="glycosylation" value="1 site, No reported glycans"/>
</dbReference>
<dbReference type="GO" id="GO:0016491">
    <property type="term" value="F:oxidoreductase activity"/>
    <property type="evidence" value="ECO:0007669"/>
    <property type="project" value="UniProtKB-KW"/>
</dbReference>
<dbReference type="Gene3D" id="3.50.50.60">
    <property type="entry name" value="FAD/NAD(P)-binding domain"/>
    <property type="match status" value="1"/>
</dbReference>
<dbReference type="InterPro" id="IPR053275">
    <property type="entry name" value="Agnestin_monoxygenase"/>
</dbReference>
<dbReference type="InterPro" id="IPR036188">
    <property type="entry name" value="FAD/NAD-bd_sf"/>
</dbReference>
<dbReference type="PANTHER" id="PTHR38688:SF1">
    <property type="entry name" value="FAD_NAD(P)-BINDING DOMAIN-CONTAINING PROTEIN"/>
    <property type="match status" value="1"/>
</dbReference>
<dbReference type="PANTHER" id="PTHR38688">
    <property type="entry name" value="PYR_REDOX_2 DOMAIN-CONTAINING PROTEIN"/>
    <property type="match status" value="1"/>
</dbReference>
<dbReference type="PRINTS" id="PR00368">
    <property type="entry name" value="FADPNR"/>
</dbReference>
<dbReference type="SUPFAM" id="SSF51905">
    <property type="entry name" value="FAD/NAD(P)-binding domain"/>
    <property type="match status" value="1"/>
</dbReference>
<keyword id="KW-0325">Glycoprotein</keyword>
<keyword id="KW-0560">Oxidoreductase</keyword>
<keyword id="KW-0732">Signal</keyword>
<comment type="function">
    <text evidence="3">Monooxygenase; part of the gene cluster that mediates the biosynthesis of agnestins, dihydroxy-xanthone metabolites (PubMed:30746079). The pathway begins with the assembly and cyclization of atrochrysone thioester by the non-reducing polyketide synthase Agnpks1 (PubMed:30746079). The atrochrysone carboxyl ACP thioesterase AgnL7 then breaks the thioester bond and releases the atrochrysone carboxylic acid as the first enzyme-free intermediate (PubMed:30746079). The decarboxylase AgnL1 then catalyzes the concerted decarboxylation-elimination required to convert atochrysone carboxylic acid into emodin anthrone, which is further oxidized to emodin by the anthrone oxygenase AgnL2 (PubMed:30746079). Emodin then undergoes reduction catalyzed by the oxidoreductase AgnL4 to yield the dihydroquinone tautomer which is the substrate for reduction by the short chain dehydrogenase AgnL6 reduction to produce hydroxyketone, followed by AgnL8 dehydration and likely spontaneous autoxidation to chrysophanol (PubMed:30746079). Baeyer-Villiger oxidation by the oxidase AgnL3 leads to monodictyphenone via cleavage of the C-10/C-10a bond of chrysophanol (PubMed:30746079). Alternative cleavage at the C-4a/C-10 bond of chrysophanol also leads to the formation some cephalone F (PubMed:30746079). Further conversion to agnestins A and B, requires reduction to dihydro-monodictyphenone, oxidation to agnestin C probably via an epoxide, and rearrangement to either agnestin A or agnestin B directly, although agnestin A or agnestin B can also interconvert (PubMed:30746079). Within the cluster, AgnR1 is the only unassigned oxidoreductase present which could be involved in this conversion. However, AgnR1 seems not to be involved in this step, and thus genes involved in the proposed oxidation/reduction may be located elsewhere on the genome (PubMed:30746079). Further agnestin A derivatives are probably formed by spontaneous decarboxylations, dehydrations and methanolysis reactions (PubMed:30746079).</text>
</comment>
<comment type="disruption phenotype">
    <text evidence="3">Does not affect the production of agnestins.</text>
</comment>
<organism>
    <name type="scientific">Paecilomyces divaricatus</name>
    <name type="common">Penicillium divaricatum</name>
    <dbReference type="NCBI Taxonomy" id="644132"/>
    <lineage>
        <taxon>Eukaryota</taxon>
        <taxon>Fungi</taxon>
        <taxon>Dikarya</taxon>
        <taxon>Ascomycota</taxon>
        <taxon>Pezizomycotina</taxon>
        <taxon>Eurotiomycetes</taxon>
        <taxon>Eurotiomycetidae</taxon>
        <taxon>Eurotiales</taxon>
        <taxon>Thermoascaceae</taxon>
        <taxon>Paecilomyces</taxon>
    </lineage>
</organism>
<feature type="signal peptide" evidence="1">
    <location>
        <begin position="1"/>
        <end position="20"/>
    </location>
</feature>
<feature type="chain" id="PRO_0000449015" description="Monooxygenase AgnR1">
    <location>
        <begin position="21"/>
        <end position="392"/>
    </location>
</feature>
<feature type="glycosylation site" description="N-linked (GlcNAc...) asparagine" evidence="2">
    <location>
        <position position="134"/>
    </location>
</feature>
<proteinExistence type="inferred from homology"/>
<name>AGNR1_PAEDI</name>
<sequence>MSAPQKCAAVVVGAGPAGLAVIGNLLERLPGSKIAWIDPYFQAGRVNRRYREVPSNTKVSLFQAYASAVQPFRTVINTTPTPNAFSTMTKLEQDKGCHLHYAADMCRALTEGILKSDEVYRCCGIVTHADLKENLSQWTVRIKSYESLEEVQVVAPRLILCTGSSPTLLRIPVPALSIQRLDLDVVLKPSELVRAIHTGSPQTVAVVGASHSAILALLNLVDLARSSHPQLRIKWFTRNALRYAEYMDGWILRDNTGLKGVAADFAREQLEDDRLPKSEAGRFIEKIDCSDGKETAAYEAHLPSCSHIVQAVGFTRDPLPELARDGMPLKAEFDHESGGFSDQDGRVIKGLYGAGIAFPERVVDPYNNVEYAVGFFKFMKFIKRVCPRWLAA</sequence>
<reference key="1">
    <citation type="journal article" date="2019" name="Chem. Sci.">
        <title>Characterisation of the biosynthetic pathway to agnestins A and B reveals the reductive route to chrysophanol in fungi.</title>
        <authorList>
            <person name="Szwalbe A.J."/>
            <person name="Williams K."/>
            <person name="Song Z."/>
            <person name="de Mattos-Shipley K."/>
            <person name="Vincent J.L."/>
            <person name="Bailey A.M."/>
            <person name="Willis C.L."/>
            <person name="Cox R.J."/>
            <person name="Simpson T.J."/>
        </authorList>
    </citation>
    <scope>NUCLEOTIDE SEQUENCE [GENOMIC DNA]</scope>
    <scope>FUNCTION</scope>
    <scope>DISRUPTION PHENOTYPE</scope>
    <source>
        <strain>K5013</strain>
    </source>
</reference>
<accession>A0A411PQP8</accession>
<evidence type="ECO:0000255" key="1"/>
<evidence type="ECO:0000255" key="2">
    <source>
        <dbReference type="PROSITE-ProRule" id="PRU00498"/>
    </source>
</evidence>
<evidence type="ECO:0000269" key="3">
    <source>
    </source>
</evidence>
<evidence type="ECO:0000303" key="4">
    <source>
    </source>
</evidence>
<evidence type="ECO:0000305" key="5">
    <source>
    </source>
</evidence>
<protein>
    <recommendedName>
        <fullName evidence="4">Monooxygenase AgnR1</fullName>
        <ecNumber evidence="5">1.-.-.-</ecNumber>
    </recommendedName>
    <alternativeName>
        <fullName evidence="4">Agnestins biosynthesis cluster protein R1</fullName>
    </alternativeName>
</protein>